<name>ZN789_HUMAN</name>
<keyword id="KW-0025">Alternative splicing</keyword>
<keyword id="KW-0238">DNA-binding</keyword>
<keyword id="KW-0479">Metal-binding</keyword>
<keyword id="KW-0539">Nucleus</keyword>
<keyword id="KW-1267">Proteomics identification</keyword>
<keyword id="KW-1185">Reference proteome</keyword>
<keyword id="KW-0677">Repeat</keyword>
<keyword id="KW-0804">Transcription</keyword>
<keyword id="KW-0805">Transcription regulation</keyword>
<keyword id="KW-0862">Zinc</keyword>
<keyword id="KW-0863">Zinc-finger</keyword>
<gene>
    <name type="primary">ZNF789</name>
</gene>
<reference key="1">
    <citation type="journal article" date="2004" name="Nat. Genet.">
        <title>Complete sequencing and characterization of 21,243 full-length human cDNAs.</title>
        <authorList>
            <person name="Ota T."/>
            <person name="Suzuki Y."/>
            <person name="Nishikawa T."/>
            <person name="Otsuki T."/>
            <person name="Sugiyama T."/>
            <person name="Irie R."/>
            <person name="Wakamatsu A."/>
            <person name="Hayashi K."/>
            <person name="Sato H."/>
            <person name="Nagai K."/>
            <person name="Kimura K."/>
            <person name="Makita H."/>
            <person name="Sekine M."/>
            <person name="Obayashi M."/>
            <person name="Nishi T."/>
            <person name="Shibahara T."/>
            <person name="Tanaka T."/>
            <person name="Ishii S."/>
            <person name="Yamamoto J."/>
            <person name="Saito K."/>
            <person name="Kawai Y."/>
            <person name="Isono Y."/>
            <person name="Nakamura Y."/>
            <person name="Nagahari K."/>
            <person name="Murakami K."/>
            <person name="Yasuda T."/>
            <person name="Iwayanagi T."/>
            <person name="Wagatsuma M."/>
            <person name="Shiratori A."/>
            <person name="Sudo H."/>
            <person name="Hosoiri T."/>
            <person name="Kaku Y."/>
            <person name="Kodaira H."/>
            <person name="Kondo H."/>
            <person name="Sugawara M."/>
            <person name="Takahashi M."/>
            <person name="Kanda K."/>
            <person name="Yokoi T."/>
            <person name="Furuya T."/>
            <person name="Kikkawa E."/>
            <person name="Omura Y."/>
            <person name="Abe K."/>
            <person name="Kamihara K."/>
            <person name="Katsuta N."/>
            <person name="Sato K."/>
            <person name="Tanikawa M."/>
            <person name="Yamazaki M."/>
            <person name="Ninomiya K."/>
            <person name="Ishibashi T."/>
            <person name="Yamashita H."/>
            <person name="Murakawa K."/>
            <person name="Fujimori K."/>
            <person name="Tanai H."/>
            <person name="Kimata M."/>
            <person name="Watanabe M."/>
            <person name="Hiraoka S."/>
            <person name="Chiba Y."/>
            <person name="Ishida S."/>
            <person name="Ono Y."/>
            <person name="Takiguchi S."/>
            <person name="Watanabe S."/>
            <person name="Yosida M."/>
            <person name="Hotuta T."/>
            <person name="Kusano J."/>
            <person name="Kanehori K."/>
            <person name="Takahashi-Fujii A."/>
            <person name="Hara H."/>
            <person name="Tanase T.-O."/>
            <person name="Nomura Y."/>
            <person name="Togiya S."/>
            <person name="Komai F."/>
            <person name="Hara R."/>
            <person name="Takeuchi K."/>
            <person name="Arita M."/>
            <person name="Imose N."/>
            <person name="Musashino K."/>
            <person name="Yuuki H."/>
            <person name="Oshima A."/>
            <person name="Sasaki N."/>
            <person name="Aotsuka S."/>
            <person name="Yoshikawa Y."/>
            <person name="Matsunawa H."/>
            <person name="Ichihara T."/>
            <person name="Shiohata N."/>
            <person name="Sano S."/>
            <person name="Moriya S."/>
            <person name="Momiyama H."/>
            <person name="Satoh N."/>
            <person name="Takami S."/>
            <person name="Terashima Y."/>
            <person name="Suzuki O."/>
            <person name="Nakagawa S."/>
            <person name="Senoh A."/>
            <person name="Mizoguchi H."/>
            <person name="Goto Y."/>
            <person name="Shimizu F."/>
            <person name="Wakebe H."/>
            <person name="Hishigaki H."/>
            <person name="Watanabe T."/>
            <person name="Sugiyama A."/>
            <person name="Takemoto M."/>
            <person name="Kawakami B."/>
            <person name="Yamazaki M."/>
            <person name="Watanabe K."/>
            <person name="Kumagai A."/>
            <person name="Itakura S."/>
            <person name="Fukuzumi Y."/>
            <person name="Fujimori Y."/>
            <person name="Komiyama M."/>
            <person name="Tashiro H."/>
            <person name="Tanigami A."/>
            <person name="Fujiwara T."/>
            <person name="Ono T."/>
            <person name="Yamada K."/>
            <person name="Fujii Y."/>
            <person name="Ozaki K."/>
            <person name="Hirao M."/>
            <person name="Ohmori Y."/>
            <person name="Kawabata A."/>
            <person name="Hikiji T."/>
            <person name="Kobatake N."/>
            <person name="Inagaki H."/>
            <person name="Ikema Y."/>
            <person name="Okamoto S."/>
            <person name="Okitani R."/>
            <person name="Kawakami T."/>
            <person name="Noguchi S."/>
            <person name="Itoh T."/>
            <person name="Shigeta K."/>
            <person name="Senba T."/>
            <person name="Matsumura K."/>
            <person name="Nakajima Y."/>
            <person name="Mizuno T."/>
            <person name="Morinaga M."/>
            <person name="Sasaki M."/>
            <person name="Togashi T."/>
            <person name="Oyama M."/>
            <person name="Hata H."/>
            <person name="Watanabe M."/>
            <person name="Komatsu T."/>
            <person name="Mizushima-Sugano J."/>
            <person name="Satoh T."/>
            <person name="Shirai Y."/>
            <person name="Takahashi Y."/>
            <person name="Nakagawa K."/>
            <person name="Okumura K."/>
            <person name="Nagase T."/>
            <person name="Nomura N."/>
            <person name="Kikuchi H."/>
            <person name="Masuho Y."/>
            <person name="Yamashita R."/>
            <person name="Nakai K."/>
            <person name="Yada T."/>
            <person name="Nakamura Y."/>
            <person name="Ohara O."/>
            <person name="Isogai T."/>
            <person name="Sugano S."/>
        </authorList>
    </citation>
    <scope>NUCLEOTIDE SEQUENCE [LARGE SCALE MRNA] (ISOFORM 2)</scope>
    <source>
        <tissue>Spleen</tissue>
    </source>
</reference>
<reference key="2">
    <citation type="journal article" date="2003" name="Nature">
        <title>The DNA sequence of human chromosome 7.</title>
        <authorList>
            <person name="Hillier L.W."/>
            <person name="Fulton R.S."/>
            <person name="Fulton L.A."/>
            <person name="Graves T.A."/>
            <person name="Pepin K.H."/>
            <person name="Wagner-McPherson C."/>
            <person name="Layman D."/>
            <person name="Maas J."/>
            <person name="Jaeger S."/>
            <person name="Walker R."/>
            <person name="Wylie K."/>
            <person name="Sekhon M."/>
            <person name="Becker M.C."/>
            <person name="O'Laughlin M.D."/>
            <person name="Schaller M.E."/>
            <person name="Fewell G.A."/>
            <person name="Delehaunty K.D."/>
            <person name="Miner T.L."/>
            <person name="Nash W.E."/>
            <person name="Cordes M."/>
            <person name="Du H."/>
            <person name="Sun H."/>
            <person name="Edwards J."/>
            <person name="Bradshaw-Cordum H."/>
            <person name="Ali J."/>
            <person name="Andrews S."/>
            <person name="Isak A."/>
            <person name="Vanbrunt A."/>
            <person name="Nguyen C."/>
            <person name="Du F."/>
            <person name="Lamar B."/>
            <person name="Courtney L."/>
            <person name="Kalicki J."/>
            <person name="Ozersky P."/>
            <person name="Bielicki L."/>
            <person name="Scott K."/>
            <person name="Holmes A."/>
            <person name="Harkins R."/>
            <person name="Harris A."/>
            <person name="Strong C.M."/>
            <person name="Hou S."/>
            <person name="Tomlinson C."/>
            <person name="Dauphin-Kohlberg S."/>
            <person name="Kozlowicz-Reilly A."/>
            <person name="Leonard S."/>
            <person name="Rohlfing T."/>
            <person name="Rock S.M."/>
            <person name="Tin-Wollam A.-M."/>
            <person name="Abbott A."/>
            <person name="Minx P."/>
            <person name="Maupin R."/>
            <person name="Strowmatt C."/>
            <person name="Latreille P."/>
            <person name="Miller N."/>
            <person name="Johnson D."/>
            <person name="Murray J."/>
            <person name="Woessner J.P."/>
            <person name="Wendl M.C."/>
            <person name="Yang S.-P."/>
            <person name="Schultz B.R."/>
            <person name="Wallis J.W."/>
            <person name="Spieth J."/>
            <person name="Bieri T.A."/>
            <person name="Nelson J.O."/>
            <person name="Berkowicz N."/>
            <person name="Wohldmann P.E."/>
            <person name="Cook L.L."/>
            <person name="Hickenbotham M.T."/>
            <person name="Eldred J."/>
            <person name="Williams D."/>
            <person name="Bedell J.A."/>
            <person name="Mardis E.R."/>
            <person name="Clifton S.W."/>
            <person name="Chissoe S.L."/>
            <person name="Marra M.A."/>
            <person name="Raymond C."/>
            <person name="Haugen E."/>
            <person name="Gillett W."/>
            <person name="Zhou Y."/>
            <person name="James R."/>
            <person name="Phelps K."/>
            <person name="Iadanoto S."/>
            <person name="Bubb K."/>
            <person name="Simms E."/>
            <person name="Levy R."/>
            <person name="Clendenning J."/>
            <person name="Kaul R."/>
            <person name="Kent W.J."/>
            <person name="Furey T.S."/>
            <person name="Baertsch R.A."/>
            <person name="Brent M.R."/>
            <person name="Keibler E."/>
            <person name="Flicek P."/>
            <person name="Bork P."/>
            <person name="Suyama M."/>
            <person name="Bailey J.A."/>
            <person name="Portnoy M.E."/>
            <person name="Torrents D."/>
            <person name="Chinwalla A.T."/>
            <person name="Gish W.R."/>
            <person name="Eddy S.R."/>
            <person name="McPherson J.D."/>
            <person name="Olson M.V."/>
            <person name="Eichler E.E."/>
            <person name="Green E.D."/>
            <person name="Waterston R.H."/>
            <person name="Wilson R.K."/>
        </authorList>
    </citation>
    <scope>NUCLEOTIDE SEQUENCE [LARGE SCALE GENOMIC DNA]</scope>
</reference>
<reference key="3">
    <citation type="journal article" date="2003" name="Science">
        <title>Human chromosome 7: DNA sequence and biology.</title>
        <authorList>
            <person name="Scherer S.W."/>
            <person name="Cheung J."/>
            <person name="MacDonald J.R."/>
            <person name="Osborne L.R."/>
            <person name="Nakabayashi K."/>
            <person name="Herbrick J.-A."/>
            <person name="Carson A.R."/>
            <person name="Parker-Katiraee L."/>
            <person name="Skaug J."/>
            <person name="Khaja R."/>
            <person name="Zhang J."/>
            <person name="Hudek A.K."/>
            <person name="Li M."/>
            <person name="Haddad M."/>
            <person name="Duggan G.E."/>
            <person name="Fernandez B.A."/>
            <person name="Kanematsu E."/>
            <person name="Gentles S."/>
            <person name="Christopoulos C.C."/>
            <person name="Choufani S."/>
            <person name="Kwasnicka D."/>
            <person name="Zheng X.H."/>
            <person name="Lai Z."/>
            <person name="Nusskern D.R."/>
            <person name="Zhang Q."/>
            <person name="Gu Z."/>
            <person name="Lu F."/>
            <person name="Zeesman S."/>
            <person name="Nowaczyk M.J."/>
            <person name="Teshima I."/>
            <person name="Chitayat D."/>
            <person name="Shuman C."/>
            <person name="Weksberg R."/>
            <person name="Zackai E.H."/>
            <person name="Grebe T.A."/>
            <person name="Cox S.R."/>
            <person name="Kirkpatrick S.J."/>
            <person name="Rahman N."/>
            <person name="Friedman J.M."/>
            <person name="Heng H.H.Q."/>
            <person name="Pelicci P.G."/>
            <person name="Lo-Coco F."/>
            <person name="Belloni E."/>
            <person name="Shaffer L.G."/>
            <person name="Pober B."/>
            <person name="Morton C.C."/>
            <person name="Gusella J.F."/>
            <person name="Bruns G.A.P."/>
            <person name="Korf B.R."/>
            <person name="Quade B.J."/>
            <person name="Ligon A.H."/>
            <person name="Ferguson H."/>
            <person name="Higgins A.W."/>
            <person name="Leach N.T."/>
            <person name="Herrick S.R."/>
            <person name="Lemyre E."/>
            <person name="Farra C.G."/>
            <person name="Kim H.-G."/>
            <person name="Summers A.M."/>
            <person name="Gripp K.W."/>
            <person name="Roberts W."/>
            <person name="Szatmari P."/>
            <person name="Winsor E.J.T."/>
            <person name="Grzeschik K.-H."/>
            <person name="Teebi A."/>
            <person name="Minassian B.A."/>
            <person name="Kere J."/>
            <person name="Armengol L."/>
            <person name="Pujana M.A."/>
            <person name="Estivill X."/>
            <person name="Wilson M.D."/>
            <person name="Koop B.F."/>
            <person name="Tosi S."/>
            <person name="Moore G.E."/>
            <person name="Boright A.P."/>
            <person name="Zlotorynski E."/>
            <person name="Kerem B."/>
            <person name="Kroisel P.M."/>
            <person name="Petek E."/>
            <person name="Oscier D.G."/>
            <person name="Mould S.J."/>
            <person name="Doehner H."/>
            <person name="Doehner K."/>
            <person name="Rommens J.M."/>
            <person name="Vincent J.B."/>
            <person name="Venter J.C."/>
            <person name="Li P.W."/>
            <person name="Mural R.J."/>
            <person name="Adams M.D."/>
            <person name="Tsui L.-C."/>
        </authorList>
    </citation>
    <scope>NUCLEOTIDE SEQUENCE [LARGE SCALE GENOMIC DNA]</scope>
</reference>
<reference key="4">
    <citation type="journal article" date="2004" name="Genome Res.">
        <title>The status, quality, and expansion of the NIH full-length cDNA project: the Mammalian Gene Collection (MGC).</title>
        <authorList>
            <consortium name="The MGC Project Team"/>
        </authorList>
    </citation>
    <scope>NUCLEOTIDE SEQUENCE [LARGE SCALE MRNA] (ISOFORM 1)</scope>
    <scope>VARIANT ALA-77</scope>
    <source>
        <tissue>Lymph</tissue>
    </source>
</reference>
<protein>
    <recommendedName>
        <fullName>Zinc finger protein 789</fullName>
    </recommendedName>
</protein>
<feature type="chain" id="PRO_0000293697" description="Zinc finger protein 789">
    <location>
        <begin position="1"/>
        <end position="425"/>
    </location>
</feature>
<feature type="domain" description="KRAB" evidence="2">
    <location>
        <begin position="11"/>
        <end position="82"/>
    </location>
</feature>
<feature type="zinc finger region" description="C2H2-type 1" evidence="1">
    <location>
        <begin position="201"/>
        <end position="223"/>
    </location>
</feature>
<feature type="zinc finger region" description="C2H2-type 2" evidence="1">
    <location>
        <begin position="229"/>
        <end position="251"/>
    </location>
</feature>
<feature type="zinc finger region" description="C2H2-type 3" evidence="1">
    <location>
        <begin position="257"/>
        <end position="279"/>
    </location>
</feature>
<feature type="zinc finger region" description="C2H2-type 4" evidence="1">
    <location>
        <begin position="285"/>
        <end position="307"/>
    </location>
</feature>
<feature type="zinc finger region" description="C2H2-type 5" evidence="1">
    <location>
        <begin position="313"/>
        <end position="335"/>
    </location>
</feature>
<feature type="zinc finger region" description="C2H2-type 6" evidence="1">
    <location>
        <begin position="341"/>
        <end position="363"/>
    </location>
</feature>
<feature type="zinc finger region" description="C2H2-type 7" evidence="1">
    <location>
        <begin position="369"/>
        <end position="391"/>
    </location>
</feature>
<feature type="zinc finger region" description="C2H2-type 8" evidence="1">
    <location>
        <begin position="397"/>
        <end position="419"/>
    </location>
</feature>
<feature type="splice variant" id="VSP_026561" description="In isoform 2." evidence="4">
    <location>
        <begin position="1"/>
        <end position="95"/>
    </location>
</feature>
<feature type="splice variant" id="VSP_046816" description="In isoform 3." evidence="5">
    <original>GFQFPKPEMICQ</original>
    <variation>VYFQFDAAIPLC</variation>
    <location>
        <begin position="51"/>
        <end position="62"/>
    </location>
</feature>
<feature type="splice variant" id="VSP_046817" description="In isoform 3." evidence="5">
    <location>
        <begin position="63"/>
        <end position="425"/>
    </location>
</feature>
<feature type="sequence variant" id="VAR_052903" description="In dbSNP:rs6962772." evidence="3">
    <original>T</original>
    <variation>A</variation>
    <location>
        <position position="77"/>
    </location>
</feature>
<feature type="sequence conflict" description="In Ref. 1; BAD18576." evidence="5" ref="1">
    <original>Q</original>
    <variation>R</variation>
    <location>
        <position position="398"/>
    </location>
</feature>
<accession>Q5FWF6</accession>
<accession>A4D282</accession>
<accession>A6NH61</accession>
<accession>Q6ZMZ9</accession>
<proteinExistence type="evidence at protein level"/>
<evidence type="ECO:0000255" key="1">
    <source>
        <dbReference type="PROSITE-ProRule" id="PRU00042"/>
    </source>
</evidence>
<evidence type="ECO:0000255" key="2">
    <source>
        <dbReference type="PROSITE-ProRule" id="PRU00119"/>
    </source>
</evidence>
<evidence type="ECO:0000269" key="3">
    <source>
    </source>
</evidence>
<evidence type="ECO:0000303" key="4">
    <source>
    </source>
</evidence>
<evidence type="ECO:0000305" key="5"/>
<dbReference type="EMBL" id="AK131429">
    <property type="protein sequence ID" value="BAD18576.1"/>
    <property type="status" value="ALT_FRAME"/>
    <property type="molecule type" value="mRNA"/>
</dbReference>
<dbReference type="EMBL" id="AC073063">
    <property type="status" value="NOT_ANNOTATED_CDS"/>
    <property type="molecule type" value="Genomic_DNA"/>
</dbReference>
<dbReference type="EMBL" id="CH236956">
    <property type="protein sequence ID" value="EAL23875.1"/>
    <property type="molecule type" value="Genomic_DNA"/>
</dbReference>
<dbReference type="EMBL" id="CH236956">
    <property type="protein sequence ID" value="EAL23876.1"/>
    <property type="status" value="ALT_SEQ"/>
    <property type="molecule type" value="Genomic_DNA"/>
</dbReference>
<dbReference type="EMBL" id="BC089424">
    <property type="protein sequence ID" value="AAH89424.2"/>
    <property type="molecule type" value="mRNA"/>
</dbReference>
<dbReference type="CCDS" id="CCDS34693.1">
    <molecule id="Q5FWF6-1"/>
</dbReference>
<dbReference type="CCDS" id="CCDS34694.1">
    <molecule id="Q5FWF6-3"/>
</dbReference>
<dbReference type="RefSeq" id="NP_001013276.1">
    <molecule id="Q5FWF6-3"/>
    <property type="nucleotide sequence ID" value="NM_001013258.2"/>
</dbReference>
<dbReference type="RefSeq" id="NP_001337931.1">
    <molecule id="Q5FWF6-2"/>
    <property type="nucleotide sequence ID" value="NM_001351002.2"/>
</dbReference>
<dbReference type="RefSeq" id="NP_001337933.1">
    <molecule id="Q5FWF6-2"/>
    <property type="nucleotide sequence ID" value="NM_001351004.2"/>
</dbReference>
<dbReference type="RefSeq" id="NP_998768.2">
    <molecule id="Q5FWF6-1"/>
    <property type="nucleotide sequence ID" value="NM_213603.3"/>
</dbReference>
<dbReference type="RefSeq" id="XP_011514375.1">
    <property type="nucleotide sequence ID" value="XM_011516073.2"/>
</dbReference>
<dbReference type="RefSeq" id="XP_016867507.1">
    <molecule id="Q5FWF6-1"/>
    <property type="nucleotide sequence ID" value="XM_017012018.2"/>
</dbReference>
<dbReference type="RefSeq" id="XP_016867514.1">
    <property type="nucleotide sequence ID" value="XM_017012025.1"/>
</dbReference>
<dbReference type="RefSeq" id="XP_016867515.1">
    <property type="nucleotide sequence ID" value="XM_017012026.1"/>
</dbReference>
<dbReference type="RefSeq" id="XP_016867516.1">
    <property type="nucleotide sequence ID" value="XM_017012027.1"/>
</dbReference>
<dbReference type="RefSeq" id="XP_024302493.1">
    <molecule id="Q5FWF6-2"/>
    <property type="nucleotide sequence ID" value="XM_024446725.2"/>
</dbReference>
<dbReference type="RefSeq" id="XP_047276186.1">
    <molecule id="Q5FWF6-2"/>
    <property type="nucleotide sequence ID" value="XM_047420230.1"/>
</dbReference>
<dbReference type="RefSeq" id="XP_054213915.1">
    <molecule id="Q5FWF6-1"/>
    <property type="nucleotide sequence ID" value="XM_054357940.1"/>
</dbReference>
<dbReference type="RefSeq" id="XP_054213920.1">
    <molecule id="Q5FWF6-2"/>
    <property type="nucleotide sequence ID" value="XM_054357945.1"/>
</dbReference>
<dbReference type="RefSeq" id="XP_054213921.1">
    <molecule id="Q5FWF6-2"/>
    <property type="nucleotide sequence ID" value="XM_054357946.1"/>
</dbReference>
<dbReference type="SMR" id="Q5FWF6"/>
<dbReference type="BioGRID" id="130267">
    <property type="interactions" value="4"/>
</dbReference>
<dbReference type="FunCoup" id="Q5FWF6">
    <property type="interactions" value="462"/>
</dbReference>
<dbReference type="IntAct" id="Q5FWF6">
    <property type="interactions" value="1"/>
</dbReference>
<dbReference type="STRING" id="9606.ENSP00000331927"/>
<dbReference type="GlyGen" id="Q5FWF6">
    <property type="glycosylation" value="1 site, 1 O-linked glycan (1 site)"/>
</dbReference>
<dbReference type="iPTMnet" id="Q5FWF6"/>
<dbReference type="PhosphoSitePlus" id="Q5FWF6"/>
<dbReference type="BioMuta" id="ZNF789"/>
<dbReference type="DMDM" id="152112419"/>
<dbReference type="jPOST" id="Q5FWF6"/>
<dbReference type="MassIVE" id="Q5FWF6"/>
<dbReference type="PaxDb" id="9606-ENSP00000331927"/>
<dbReference type="PeptideAtlas" id="Q5FWF6"/>
<dbReference type="ProteomicsDB" id="1182"/>
<dbReference type="ProteomicsDB" id="62816">
    <molecule id="Q5FWF6-1"/>
</dbReference>
<dbReference type="ProteomicsDB" id="62817">
    <molecule id="Q5FWF6-2"/>
</dbReference>
<dbReference type="Antibodypedia" id="30371">
    <property type="antibodies" value="14 antibodies from 7 providers"/>
</dbReference>
<dbReference type="DNASU" id="285989"/>
<dbReference type="Ensembl" id="ENST00000331410.10">
    <molecule id="Q5FWF6-1"/>
    <property type="protein sequence ID" value="ENSP00000331927.5"/>
    <property type="gene ID" value="ENSG00000198556.14"/>
</dbReference>
<dbReference type="Ensembl" id="ENST00000379724.3">
    <molecule id="Q5FWF6-3"/>
    <property type="protein sequence ID" value="ENSP00000369047.3"/>
    <property type="gene ID" value="ENSG00000198556.14"/>
</dbReference>
<dbReference type="GeneID" id="285989"/>
<dbReference type="KEGG" id="hsa:285989"/>
<dbReference type="MANE-Select" id="ENST00000331410.10">
    <property type="protein sequence ID" value="ENSP00000331927.5"/>
    <property type="RefSeq nucleotide sequence ID" value="NM_213603.3"/>
    <property type="RefSeq protein sequence ID" value="NP_998768.2"/>
</dbReference>
<dbReference type="UCSC" id="uc003uqp.4">
    <molecule id="Q5FWF6-1"/>
    <property type="organism name" value="human"/>
</dbReference>
<dbReference type="AGR" id="HGNC:27801"/>
<dbReference type="CTD" id="285989"/>
<dbReference type="DisGeNET" id="285989"/>
<dbReference type="GeneCards" id="ZNF789"/>
<dbReference type="HGNC" id="HGNC:27801">
    <property type="gene designation" value="ZNF789"/>
</dbReference>
<dbReference type="HPA" id="ENSG00000198556">
    <property type="expression patterns" value="Low tissue specificity"/>
</dbReference>
<dbReference type="neXtProt" id="NX_Q5FWF6"/>
<dbReference type="OpenTargets" id="ENSG00000198556"/>
<dbReference type="PharmGKB" id="PA162410492"/>
<dbReference type="VEuPathDB" id="HostDB:ENSG00000198556"/>
<dbReference type="eggNOG" id="KOG1721">
    <property type="taxonomic scope" value="Eukaryota"/>
</dbReference>
<dbReference type="GeneTree" id="ENSGT00940000163495"/>
<dbReference type="HOGENOM" id="CLU_002678_0_7_1"/>
<dbReference type="InParanoid" id="Q5FWF6"/>
<dbReference type="OMA" id="HKQCHPQ"/>
<dbReference type="OrthoDB" id="6077919at2759"/>
<dbReference type="PAN-GO" id="Q5FWF6">
    <property type="GO annotations" value="4 GO annotations based on evolutionary models"/>
</dbReference>
<dbReference type="PhylomeDB" id="Q5FWF6"/>
<dbReference type="TreeFam" id="TF337055"/>
<dbReference type="PathwayCommons" id="Q5FWF6"/>
<dbReference type="SignaLink" id="Q5FWF6"/>
<dbReference type="BioGRID-ORCS" id="285989">
    <property type="hits" value="15 hits in 1176 CRISPR screens"/>
</dbReference>
<dbReference type="ChiTaRS" id="ZNF789">
    <property type="organism name" value="human"/>
</dbReference>
<dbReference type="GenomeRNAi" id="285989"/>
<dbReference type="Pharos" id="Q5FWF6">
    <property type="development level" value="Tdark"/>
</dbReference>
<dbReference type="PRO" id="PR:Q5FWF6"/>
<dbReference type="Proteomes" id="UP000005640">
    <property type="component" value="Chromosome 7"/>
</dbReference>
<dbReference type="RNAct" id="Q5FWF6">
    <property type="molecule type" value="protein"/>
</dbReference>
<dbReference type="Bgee" id="ENSG00000198556">
    <property type="expression patterns" value="Expressed in cerebellar hemisphere and 145 other cell types or tissues"/>
</dbReference>
<dbReference type="ExpressionAtlas" id="Q5FWF6">
    <property type="expression patterns" value="baseline and differential"/>
</dbReference>
<dbReference type="GO" id="GO:0005654">
    <property type="term" value="C:nucleoplasm"/>
    <property type="evidence" value="ECO:0000314"/>
    <property type="project" value="HPA"/>
</dbReference>
<dbReference type="GO" id="GO:0005634">
    <property type="term" value="C:nucleus"/>
    <property type="evidence" value="ECO:0000318"/>
    <property type="project" value="GO_Central"/>
</dbReference>
<dbReference type="GO" id="GO:0000981">
    <property type="term" value="F:DNA-binding transcription factor activity, RNA polymerase II-specific"/>
    <property type="evidence" value="ECO:0000318"/>
    <property type="project" value="GO_Central"/>
</dbReference>
<dbReference type="GO" id="GO:0000978">
    <property type="term" value="F:RNA polymerase II cis-regulatory region sequence-specific DNA binding"/>
    <property type="evidence" value="ECO:0000318"/>
    <property type="project" value="GO_Central"/>
</dbReference>
<dbReference type="GO" id="GO:0008270">
    <property type="term" value="F:zinc ion binding"/>
    <property type="evidence" value="ECO:0007669"/>
    <property type="project" value="UniProtKB-KW"/>
</dbReference>
<dbReference type="GO" id="GO:0006357">
    <property type="term" value="P:regulation of transcription by RNA polymerase II"/>
    <property type="evidence" value="ECO:0000318"/>
    <property type="project" value="GO_Central"/>
</dbReference>
<dbReference type="CDD" id="cd07765">
    <property type="entry name" value="KRAB_A-box"/>
    <property type="match status" value="1"/>
</dbReference>
<dbReference type="FunFam" id="3.30.160.60:FF:000355">
    <property type="entry name" value="zinc finger and SCAN domain-containing protein 20 isoform X1"/>
    <property type="match status" value="3"/>
</dbReference>
<dbReference type="FunFam" id="3.30.160.60:FF:000681">
    <property type="entry name" value="zinc finger protein 205 isoform X1"/>
    <property type="match status" value="1"/>
</dbReference>
<dbReference type="FunFam" id="3.30.160.60:FF:001498">
    <property type="entry name" value="Zinc finger protein 404"/>
    <property type="match status" value="1"/>
</dbReference>
<dbReference type="FunFam" id="3.30.160.60:FF:002090">
    <property type="entry name" value="Zinc finger protein 473"/>
    <property type="match status" value="1"/>
</dbReference>
<dbReference type="FunFam" id="3.30.160.60:FF:003144">
    <property type="entry name" value="Zinc finger protein 789"/>
    <property type="match status" value="1"/>
</dbReference>
<dbReference type="FunFam" id="3.30.160.60:FF:003195">
    <property type="entry name" value="Zinc finger protein 789"/>
    <property type="match status" value="1"/>
</dbReference>
<dbReference type="Gene3D" id="6.10.140.140">
    <property type="match status" value="1"/>
</dbReference>
<dbReference type="Gene3D" id="3.30.160.60">
    <property type="entry name" value="Classic Zinc Finger"/>
    <property type="match status" value="8"/>
</dbReference>
<dbReference type="InterPro" id="IPR001909">
    <property type="entry name" value="KRAB"/>
</dbReference>
<dbReference type="InterPro" id="IPR036051">
    <property type="entry name" value="KRAB_dom_sf"/>
</dbReference>
<dbReference type="InterPro" id="IPR050826">
    <property type="entry name" value="Krueppel_C2H2_ZnFinger"/>
</dbReference>
<dbReference type="InterPro" id="IPR036236">
    <property type="entry name" value="Znf_C2H2_sf"/>
</dbReference>
<dbReference type="InterPro" id="IPR013087">
    <property type="entry name" value="Znf_C2H2_type"/>
</dbReference>
<dbReference type="PANTHER" id="PTHR24377">
    <property type="entry name" value="IP01015P-RELATED"/>
    <property type="match status" value="1"/>
</dbReference>
<dbReference type="Pfam" id="PF01352">
    <property type="entry name" value="KRAB"/>
    <property type="match status" value="1"/>
</dbReference>
<dbReference type="Pfam" id="PF00096">
    <property type="entry name" value="zf-C2H2"/>
    <property type="match status" value="7"/>
</dbReference>
<dbReference type="SMART" id="SM00349">
    <property type="entry name" value="KRAB"/>
    <property type="match status" value="1"/>
</dbReference>
<dbReference type="SMART" id="SM00355">
    <property type="entry name" value="ZnF_C2H2"/>
    <property type="match status" value="8"/>
</dbReference>
<dbReference type="SUPFAM" id="SSF57667">
    <property type="entry name" value="beta-beta-alpha zinc fingers"/>
    <property type="match status" value="5"/>
</dbReference>
<dbReference type="SUPFAM" id="SSF109640">
    <property type="entry name" value="KRAB domain (Kruppel-associated box)"/>
    <property type="match status" value="1"/>
</dbReference>
<dbReference type="PROSITE" id="PS50805">
    <property type="entry name" value="KRAB"/>
    <property type="match status" value="1"/>
</dbReference>
<dbReference type="PROSITE" id="PS00028">
    <property type="entry name" value="ZINC_FINGER_C2H2_1"/>
    <property type="match status" value="8"/>
</dbReference>
<dbReference type="PROSITE" id="PS50157">
    <property type="entry name" value="ZINC_FINGER_C2H2_2"/>
    <property type="match status" value="8"/>
</dbReference>
<sequence>MFPPARGKELLSFEDVAMYFTREEWGHLNWGQKDLYRDVMLENYRNMVLLGFQFPKPEMICQLENWDEQWILDLPRTGNRKASGSACPGSEARHKMKKLTPKQKFSEDLESYKISVVMQESAEKLSEKLHKCKEFVDSCRLTFPTSGDEYSRGFLQNLNLIQDQNAQTRWKQGRYDEDGKPFNQRSLLLGHERILTRAKSYECSECGKVIRRKAWFDQHQRIHFLENPFECKVCGQAFRQRSALTVHKQCHLQNKPYRCHDCGKCFRQLAYLVEHKRIHTKEKPYKCSKCEKTFSQNSTLIRHQVIHSGEKRHKCLECGKAFGRHSTLLCHQQIHSKPNTHKCSECGQSFGRNVDLIQHQRIHTKEEFFQCGECGKTFSFKRNLFRHQVIHTGSQPYQCVICGKSFKWHTSFIKHQGTHKGQIST</sequence>
<comment type="function">
    <text>May be involved in transcriptional regulation.</text>
</comment>
<comment type="interaction">
    <interactant intactId="EBI-13076752">
        <id>Q5FWF6</id>
    </interactant>
    <interactant intactId="EBI-5460660">
        <id>Q96MH2</id>
        <label>HEXIM2</label>
    </interactant>
    <organismsDiffer>false</organismsDiffer>
    <experiments>3</experiments>
</comment>
<comment type="subcellular location">
    <subcellularLocation>
        <location evidence="5">Nucleus</location>
    </subcellularLocation>
</comment>
<comment type="alternative products">
    <event type="alternative splicing"/>
    <isoform>
        <id>Q5FWF6-1</id>
        <name>1</name>
        <sequence type="displayed"/>
    </isoform>
    <isoform>
        <id>Q5FWF6-2</id>
        <name>2</name>
        <sequence type="described" ref="VSP_026561"/>
    </isoform>
    <isoform>
        <id>Q5FWF6-3</id>
        <name>3</name>
        <sequence type="described" ref="VSP_046816 VSP_046817"/>
    </isoform>
</comment>
<comment type="similarity">
    <text evidence="5">Belongs to the krueppel C2H2-type zinc-finger protein family.</text>
</comment>
<comment type="sequence caution" evidence="5">
    <conflict type="erroneous gene model prediction">
        <sequence resource="EMBL-CDS" id="EAL23876"/>
    </conflict>
</comment>
<comment type="sequence caution" evidence="5">
    <molecule>Isoform 2</molecule>
    <conflict type="frameshift">
        <sequence resource="EMBL-CDS" id="BAD18576"/>
    </conflict>
</comment>
<organism>
    <name type="scientific">Homo sapiens</name>
    <name type="common">Human</name>
    <dbReference type="NCBI Taxonomy" id="9606"/>
    <lineage>
        <taxon>Eukaryota</taxon>
        <taxon>Metazoa</taxon>
        <taxon>Chordata</taxon>
        <taxon>Craniata</taxon>
        <taxon>Vertebrata</taxon>
        <taxon>Euteleostomi</taxon>
        <taxon>Mammalia</taxon>
        <taxon>Eutheria</taxon>
        <taxon>Euarchontoglires</taxon>
        <taxon>Primates</taxon>
        <taxon>Haplorrhini</taxon>
        <taxon>Catarrhini</taxon>
        <taxon>Hominidae</taxon>
        <taxon>Homo</taxon>
    </lineage>
</organism>